<proteinExistence type="inferred from homology"/>
<protein>
    <recommendedName>
        <fullName>Cytochrome c oxidase polypeptide 4</fullName>
        <ecNumber>7.1.1.9</ecNumber>
    </recommendedName>
    <alternativeName>
        <fullName>Cytochrome aa3 subunit 4</fullName>
    </alternativeName>
    <alternativeName>
        <fullName>Cytochrome c oxidase polypeptide IV</fullName>
    </alternativeName>
</protein>
<organism>
    <name type="scientific">Corynebacterium efficiens (strain DSM 44549 / YS-314 / AJ 12310 / JCM 11189 / NBRC 100395)</name>
    <dbReference type="NCBI Taxonomy" id="196164"/>
    <lineage>
        <taxon>Bacteria</taxon>
        <taxon>Bacillati</taxon>
        <taxon>Actinomycetota</taxon>
        <taxon>Actinomycetes</taxon>
        <taxon>Mycobacteriales</taxon>
        <taxon>Corynebacteriaceae</taxon>
        <taxon>Corynebacterium</taxon>
    </lineage>
</organism>
<accession>Q8FNQ8</accession>
<keyword id="KW-1003">Cell membrane</keyword>
<keyword id="KW-0472">Membrane</keyword>
<keyword id="KW-1185">Reference proteome</keyword>
<keyword id="KW-1278">Translocase</keyword>
<keyword id="KW-0812">Transmembrane</keyword>
<keyword id="KW-1133">Transmembrane helix</keyword>
<comment type="function">
    <text evidence="1">Part of cytochrome c oxidase, its function is unknown.</text>
</comment>
<comment type="catalytic activity">
    <reaction>
        <text>4 Fe(II)-[cytochrome c] + O2 + 8 H(+)(in) = 4 Fe(III)-[cytochrome c] + 2 H2O + 4 H(+)(out)</text>
        <dbReference type="Rhea" id="RHEA:11436"/>
        <dbReference type="Rhea" id="RHEA-COMP:10350"/>
        <dbReference type="Rhea" id="RHEA-COMP:14399"/>
        <dbReference type="ChEBI" id="CHEBI:15377"/>
        <dbReference type="ChEBI" id="CHEBI:15378"/>
        <dbReference type="ChEBI" id="CHEBI:15379"/>
        <dbReference type="ChEBI" id="CHEBI:29033"/>
        <dbReference type="ChEBI" id="CHEBI:29034"/>
        <dbReference type="EC" id="7.1.1.9"/>
    </reaction>
</comment>
<comment type="subunit">
    <text evidence="1">Associates with subunits I, II and III to form cytochrome c oxidase.</text>
</comment>
<comment type="subcellular location">
    <subcellularLocation>
        <location evidence="1">Cell membrane</location>
        <topology evidence="1">Multi-pass membrane protein</topology>
    </subcellularLocation>
</comment>
<comment type="similarity">
    <text evidence="3">Belongs to the cytochrome c oxidase bacterial subunit CtaF family.</text>
</comment>
<name>COX4_COREF</name>
<feature type="chain" id="PRO_0000220014" description="Cytochrome c oxidase polypeptide 4">
    <location>
        <begin position="1"/>
        <end position="143"/>
    </location>
</feature>
<feature type="transmembrane region" description="Helical" evidence="2">
    <location>
        <begin position="7"/>
        <end position="27"/>
    </location>
</feature>
<feature type="transmembrane region" description="Helical" evidence="2">
    <location>
        <begin position="40"/>
        <end position="60"/>
    </location>
</feature>
<feature type="transmembrane region" description="Helical" evidence="2">
    <location>
        <begin position="83"/>
        <end position="103"/>
    </location>
</feature>
<feature type="transmembrane region" description="Helical" evidence="2">
    <location>
        <begin position="105"/>
        <end position="125"/>
    </location>
</feature>
<dbReference type="EC" id="7.1.1.9"/>
<dbReference type="EMBL" id="BA000035">
    <property type="protein sequence ID" value="BAC18896.1"/>
    <property type="molecule type" value="Genomic_DNA"/>
</dbReference>
<dbReference type="RefSeq" id="WP_006768088.1">
    <property type="nucleotide sequence ID" value="NC_004369.1"/>
</dbReference>
<dbReference type="SMR" id="Q8FNQ8"/>
<dbReference type="STRING" id="196164.gene:10742514"/>
<dbReference type="KEGG" id="cef:CE2086"/>
<dbReference type="eggNOG" id="ENOG5032TTI">
    <property type="taxonomic scope" value="Bacteria"/>
</dbReference>
<dbReference type="HOGENOM" id="CLU_145919_0_0_11"/>
<dbReference type="OrthoDB" id="5244617at2"/>
<dbReference type="Proteomes" id="UP000001409">
    <property type="component" value="Chromosome"/>
</dbReference>
<dbReference type="GO" id="GO:0005886">
    <property type="term" value="C:plasma membrane"/>
    <property type="evidence" value="ECO:0007669"/>
    <property type="project" value="UniProtKB-SubCell"/>
</dbReference>
<dbReference type="GO" id="GO:0004129">
    <property type="term" value="F:cytochrome-c oxidase activity"/>
    <property type="evidence" value="ECO:0007669"/>
    <property type="project" value="UniProtKB-EC"/>
</dbReference>
<dbReference type="GO" id="GO:0022900">
    <property type="term" value="P:electron transport chain"/>
    <property type="evidence" value="ECO:0007669"/>
    <property type="project" value="InterPro"/>
</dbReference>
<dbReference type="InterPro" id="IPR021050">
    <property type="entry name" value="Cyt_c_oxidase_su4_actinobac"/>
</dbReference>
<dbReference type="Pfam" id="PF12270">
    <property type="entry name" value="Cyt_c_ox_IV"/>
    <property type="match status" value="1"/>
</dbReference>
<dbReference type="PIRSF" id="PIRSF017385">
    <property type="entry name" value="CtaF"/>
    <property type="match status" value="1"/>
</dbReference>
<evidence type="ECO:0000250" key="1"/>
<evidence type="ECO:0000255" key="2"/>
<evidence type="ECO:0000305" key="3"/>
<sequence length="143" mass="15646">MKSSSKIMYGLTVFLAAMAVIYIFGTMYVDDRGSVMGLEWVGATALVLSTALTLMLGVYIHITERRTDVLPEDWEEAEVADKAGTLGFFSPGSIWPAAMSGAVGLLGFGIIFMHYWLILVGALALTYTIAKLNFQYGVPREKH</sequence>
<reference key="1">
    <citation type="journal article" date="2003" name="Genome Res.">
        <title>Comparative complete genome sequence analysis of the amino acid replacements responsible for the thermostability of Corynebacterium efficiens.</title>
        <authorList>
            <person name="Nishio Y."/>
            <person name="Nakamura Y."/>
            <person name="Kawarabayasi Y."/>
            <person name="Usuda Y."/>
            <person name="Kimura E."/>
            <person name="Sugimoto S."/>
            <person name="Matsui K."/>
            <person name="Yamagishi A."/>
            <person name="Kikuchi H."/>
            <person name="Ikeo K."/>
            <person name="Gojobori T."/>
        </authorList>
    </citation>
    <scope>NUCLEOTIDE SEQUENCE [LARGE SCALE GENOMIC DNA]</scope>
    <source>
        <strain>DSM 44549 / YS-314 / AJ 12310 / JCM 11189 / NBRC 100395</strain>
    </source>
</reference>
<gene>
    <name type="primary">ctaF</name>
    <name type="ordered locus">CE2086</name>
</gene>